<accession>Q3TCT4</accession>
<accession>B9EHD3</accession>
<accession>Q3TM04</accession>
<accession>Q571A5</accession>
<accession>Q9ET10</accession>
<reference key="1">
    <citation type="journal article" date="2001" name="J. Biol. Chem.">
        <title>Molecular cloning and characterization of a novel mammalian endo-apyrase (LALP1).</title>
        <authorList>
            <person name="Shi J.-D."/>
            <person name="Kukar T."/>
            <person name="Wang C.-Y."/>
            <person name="Li Q.-Z."/>
            <person name="Cruz P.E."/>
            <person name="Davoodi-Semiromi A."/>
            <person name="Yang P."/>
            <person name="Gu Y."/>
            <person name="Lian W."/>
            <person name="Wu D.H."/>
            <person name="She J.-X."/>
        </authorList>
    </citation>
    <scope>NUCLEOTIDE SEQUENCE [MRNA] (ISOFORM 1)</scope>
    <scope>TISSUE SPECIFICITY</scope>
</reference>
<reference key="2">
    <citation type="journal article" date="2005" name="Science">
        <title>The transcriptional landscape of the mammalian genome.</title>
        <authorList>
            <person name="Carninci P."/>
            <person name="Kasukawa T."/>
            <person name="Katayama S."/>
            <person name="Gough J."/>
            <person name="Frith M.C."/>
            <person name="Maeda N."/>
            <person name="Oyama R."/>
            <person name="Ravasi T."/>
            <person name="Lenhard B."/>
            <person name="Wells C."/>
            <person name="Kodzius R."/>
            <person name="Shimokawa K."/>
            <person name="Bajic V.B."/>
            <person name="Brenner S.E."/>
            <person name="Batalov S."/>
            <person name="Forrest A.R."/>
            <person name="Zavolan M."/>
            <person name="Davis M.J."/>
            <person name="Wilming L.G."/>
            <person name="Aidinis V."/>
            <person name="Allen J.E."/>
            <person name="Ambesi-Impiombato A."/>
            <person name="Apweiler R."/>
            <person name="Aturaliya R.N."/>
            <person name="Bailey T.L."/>
            <person name="Bansal M."/>
            <person name="Baxter L."/>
            <person name="Beisel K.W."/>
            <person name="Bersano T."/>
            <person name="Bono H."/>
            <person name="Chalk A.M."/>
            <person name="Chiu K.P."/>
            <person name="Choudhary V."/>
            <person name="Christoffels A."/>
            <person name="Clutterbuck D.R."/>
            <person name="Crowe M.L."/>
            <person name="Dalla E."/>
            <person name="Dalrymple B.P."/>
            <person name="de Bono B."/>
            <person name="Della Gatta G."/>
            <person name="di Bernardo D."/>
            <person name="Down T."/>
            <person name="Engstrom P."/>
            <person name="Fagiolini M."/>
            <person name="Faulkner G."/>
            <person name="Fletcher C.F."/>
            <person name="Fukushima T."/>
            <person name="Furuno M."/>
            <person name="Futaki S."/>
            <person name="Gariboldi M."/>
            <person name="Georgii-Hemming P."/>
            <person name="Gingeras T.R."/>
            <person name="Gojobori T."/>
            <person name="Green R.E."/>
            <person name="Gustincich S."/>
            <person name="Harbers M."/>
            <person name="Hayashi Y."/>
            <person name="Hensch T.K."/>
            <person name="Hirokawa N."/>
            <person name="Hill D."/>
            <person name="Huminiecki L."/>
            <person name="Iacono M."/>
            <person name="Ikeo K."/>
            <person name="Iwama A."/>
            <person name="Ishikawa T."/>
            <person name="Jakt M."/>
            <person name="Kanapin A."/>
            <person name="Katoh M."/>
            <person name="Kawasawa Y."/>
            <person name="Kelso J."/>
            <person name="Kitamura H."/>
            <person name="Kitano H."/>
            <person name="Kollias G."/>
            <person name="Krishnan S.P."/>
            <person name="Kruger A."/>
            <person name="Kummerfeld S.K."/>
            <person name="Kurochkin I.V."/>
            <person name="Lareau L.F."/>
            <person name="Lazarevic D."/>
            <person name="Lipovich L."/>
            <person name="Liu J."/>
            <person name="Liuni S."/>
            <person name="McWilliam S."/>
            <person name="Madan Babu M."/>
            <person name="Madera M."/>
            <person name="Marchionni L."/>
            <person name="Matsuda H."/>
            <person name="Matsuzawa S."/>
            <person name="Miki H."/>
            <person name="Mignone F."/>
            <person name="Miyake S."/>
            <person name="Morris K."/>
            <person name="Mottagui-Tabar S."/>
            <person name="Mulder N."/>
            <person name="Nakano N."/>
            <person name="Nakauchi H."/>
            <person name="Ng P."/>
            <person name="Nilsson R."/>
            <person name="Nishiguchi S."/>
            <person name="Nishikawa S."/>
            <person name="Nori F."/>
            <person name="Ohara O."/>
            <person name="Okazaki Y."/>
            <person name="Orlando V."/>
            <person name="Pang K.C."/>
            <person name="Pavan W.J."/>
            <person name="Pavesi G."/>
            <person name="Pesole G."/>
            <person name="Petrovsky N."/>
            <person name="Piazza S."/>
            <person name="Reed J."/>
            <person name="Reid J.F."/>
            <person name="Ring B.Z."/>
            <person name="Ringwald M."/>
            <person name="Rost B."/>
            <person name="Ruan Y."/>
            <person name="Salzberg S.L."/>
            <person name="Sandelin A."/>
            <person name="Schneider C."/>
            <person name="Schoenbach C."/>
            <person name="Sekiguchi K."/>
            <person name="Semple C.A."/>
            <person name="Seno S."/>
            <person name="Sessa L."/>
            <person name="Sheng Y."/>
            <person name="Shibata Y."/>
            <person name="Shimada H."/>
            <person name="Shimada K."/>
            <person name="Silva D."/>
            <person name="Sinclair B."/>
            <person name="Sperling S."/>
            <person name="Stupka E."/>
            <person name="Sugiura K."/>
            <person name="Sultana R."/>
            <person name="Takenaka Y."/>
            <person name="Taki K."/>
            <person name="Tammoja K."/>
            <person name="Tan S.L."/>
            <person name="Tang S."/>
            <person name="Taylor M.S."/>
            <person name="Tegner J."/>
            <person name="Teichmann S.A."/>
            <person name="Ueda H.R."/>
            <person name="van Nimwegen E."/>
            <person name="Verardo R."/>
            <person name="Wei C.L."/>
            <person name="Yagi K."/>
            <person name="Yamanishi H."/>
            <person name="Zabarovsky E."/>
            <person name="Zhu S."/>
            <person name="Zimmer A."/>
            <person name="Hide W."/>
            <person name="Bult C."/>
            <person name="Grimmond S.M."/>
            <person name="Teasdale R.D."/>
            <person name="Liu E.T."/>
            <person name="Brusic V."/>
            <person name="Quackenbush J."/>
            <person name="Wahlestedt C."/>
            <person name="Mattick J.S."/>
            <person name="Hume D.A."/>
            <person name="Kai C."/>
            <person name="Sasaki D."/>
            <person name="Tomaru Y."/>
            <person name="Fukuda S."/>
            <person name="Kanamori-Katayama M."/>
            <person name="Suzuki M."/>
            <person name="Aoki J."/>
            <person name="Arakawa T."/>
            <person name="Iida J."/>
            <person name="Imamura K."/>
            <person name="Itoh M."/>
            <person name="Kato T."/>
            <person name="Kawaji H."/>
            <person name="Kawagashira N."/>
            <person name="Kawashima T."/>
            <person name="Kojima M."/>
            <person name="Kondo S."/>
            <person name="Konno H."/>
            <person name="Nakano K."/>
            <person name="Ninomiya N."/>
            <person name="Nishio T."/>
            <person name="Okada M."/>
            <person name="Plessy C."/>
            <person name="Shibata K."/>
            <person name="Shiraki T."/>
            <person name="Suzuki S."/>
            <person name="Tagami M."/>
            <person name="Waki K."/>
            <person name="Watahiki A."/>
            <person name="Okamura-Oho Y."/>
            <person name="Suzuki H."/>
            <person name="Kawai J."/>
            <person name="Hayashizaki Y."/>
        </authorList>
    </citation>
    <scope>NUCLEOTIDE SEQUENCE [LARGE SCALE MRNA] (ISOFORMS 1 AND 2)</scope>
    <source>
        <strain>C57BL/6J</strain>
        <strain>NOD</strain>
        <tissue>Mammary gland</tissue>
    </source>
</reference>
<reference key="3">
    <citation type="journal article" date="2004" name="Genome Res.">
        <title>The status, quality, and expansion of the NIH full-length cDNA project: the Mammalian Gene Collection (MGC).</title>
        <authorList>
            <consortium name="The MGC Project Team"/>
        </authorList>
    </citation>
    <scope>NUCLEOTIDE SEQUENCE [LARGE SCALE MRNA] (ISOFORM 1)</scope>
    <source>
        <tissue>Testis</tissue>
        <tissue>Thymus</tissue>
    </source>
</reference>
<reference key="4">
    <citation type="submission" date="2005-02" db="EMBL/GenBank/DDBJ databases">
        <title>Prediction of the coding sequences of mouse homologues of KIAA gene. The complete nucleotide sequences of mouse KIAA-homologous cDNAs identified by screening of terminal sequences of cDNA clones randomly sampled from size-fractionated libraries.</title>
        <authorList>
            <person name="Okazaki N."/>
            <person name="Kikuno R.F."/>
            <person name="Ohara R."/>
            <person name="Inamoto S."/>
            <person name="Nagase T."/>
            <person name="Ohara O."/>
            <person name="Koga H."/>
        </authorList>
    </citation>
    <scope>NUCLEOTIDE SEQUENCE [LARGE SCALE MRNA] OF 495-606 (ISOFORM 1)</scope>
    <source>
        <tissue>Pancreatic islet</tissue>
    </source>
</reference>
<reference key="5">
    <citation type="journal article" date="2013" name="J. Immunol.">
        <title>Ecto-nucleoside triphosphate diphosphohydrolase 7 controls Th17 cell responses through regulation of luminal ATP in the small intestine.</title>
        <authorList>
            <person name="Kusu T."/>
            <person name="Kayama H."/>
            <person name="Kinoshita M."/>
            <person name="Jeon S.G."/>
            <person name="Ueda Y."/>
            <person name="Goto Y."/>
            <person name="Okumura R."/>
            <person name="Saiga H."/>
            <person name="Kurakawa T."/>
            <person name="Ikeda K."/>
            <person name="Maeda Y."/>
            <person name="Nishimura J."/>
            <person name="Arima Y."/>
            <person name="Atarashi K."/>
            <person name="Honda K."/>
            <person name="Murakami M."/>
            <person name="Kunisawa J."/>
            <person name="Kiyono H."/>
            <person name="Okumura M."/>
            <person name="Yamamoto M."/>
            <person name="Takeda K."/>
        </authorList>
    </citation>
    <scope>DISRUPTION PHENOTYPE</scope>
    <scope>TISSUE SPECIFICITY</scope>
    <scope>CATALYTIC ACTIVITY</scope>
    <scope>FUNCTION</scope>
</reference>
<proteinExistence type="evidence at protein level"/>
<gene>
    <name type="primary">Entpd7</name>
    <name type="synonym">Kiaa4066</name>
    <name evidence="7" type="synonym">Lalp1</name>
</gene>
<dbReference type="EC" id="3.6.1.15" evidence="6"/>
<dbReference type="EMBL" id="AF288221">
    <property type="protein sequence ID" value="AAG01009.1"/>
    <property type="molecule type" value="mRNA"/>
</dbReference>
<dbReference type="EMBL" id="AK147401">
    <property type="protein sequence ID" value="BAE27889.1"/>
    <property type="molecule type" value="mRNA"/>
</dbReference>
<dbReference type="EMBL" id="AK166220">
    <property type="protein sequence ID" value="BAE38638.1"/>
    <property type="molecule type" value="mRNA"/>
</dbReference>
<dbReference type="EMBL" id="AK170546">
    <property type="protein sequence ID" value="BAE41871.1"/>
    <property type="molecule type" value="mRNA"/>
</dbReference>
<dbReference type="EMBL" id="BC137709">
    <property type="protein sequence ID" value="AAI37710.1"/>
    <property type="molecule type" value="mRNA"/>
</dbReference>
<dbReference type="EMBL" id="BC137717">
    <property type="protein sequence ID" value="AAI37718.1"/>
    <property type="molecule type" value="mRNA"/>
</dbReference>
<dbReference type="EMBL" id="AK220284">
    <property type="protein sequence ID" value="BAD90209.1"/>
    <property type="molecule type" value="mRNA"/>
</dbReference>
<dbReference type="CCDS" id="CCDS29835.1">
    <molecule id="Q3TCT4-1"/>
</dbReference>
<dbReference type="RefSeq" id="NP_444333.3">
    <molecule id="Q3TCT4-1"/>
    <property type="nucleotide sequence ID" value="NM_053103.5"/>
</dbReference>
<dbReference type="SMR" id="Q3TCT4"/>
<dbReference type="FunCoup" id="Q3TCT4">
    <property type="interactions" value="925"/>
</dbReference>
<dbReference type="STRING" id="10090.ENSMUSP00000079864"/>
<dbReference type="GlyCosmos" id="Q3TCT4">
    <property type="glycosylation" value="1 site, No reported glycans"/>
</dbReference>
<dbReference type="GlyGen" id="Q3TCT4">
    <property type="glycosylation" value="1 site, 1 N-linked glycan (1 site)"/>
</dbReference>
<dbReference type="PhosphoSitePlus" id="Q3TCT4"/>
<dbReference type="PaxDb" id="10090-ENSMUSP00000079864"/>
<dbReference type="PeptideAtlas" id="Q3TCT4"/>
<dbReference type="ProteomicsDB" id="275919">
    <molecule id="Q3TCT4-1"/>
</dbReference>
<dbReference type="ProteomicsDB" id="275920">
    <molecule id="Q3TCT4-2"/>
</dbReference>
<dbReference type="Pumba" id="Q3TCT4"/>
<dbReference type="Antibodypedia" id="3066">
    <property type="antibodies" value="93 antibodies from 21 providers"/>
</dbReference>
<dbReference type="DNASU" id="93685"/>
<dbReference type="Ensembl" id="ENSMUST00000081079.6">
    <molecule id="Q3TCT4-1"/>
    <property type="protein sequence ID" value="ENSMUSP00000079864.6"/>
    <property type="gene ID" value="ENSMUSG00000025192.14"/>
</dbReference>
<dbReference type="GeneID" id="93685"/>
<dbReference type="KEGG" id="mmu:93685"/>
<dbReference type="UCSC" id="uc008hor.2">
    <molecule id="Q3TCT4-2"/>
    <property type="organism name" value="mouse"/>
</dbReference>
<dbReference type="UCSC" id="uc008hos.2">
    <molecule id="Q3TCT4-1"/>
    <property type="organism name" value="mouse"/>
</dbReference>
<dbReference type="AGR" id="MGI:2135885"/>
<dbReference type="CTD" id="57089"/>
<dbReference type="MGI" id="MGI:2135885">
    <property type="gene designation" value="Entpd7"/>
</dbReference>
<dbReference type="VEuPathDB" id="HostDB:ENSMUSG00000025192"/>
<dbReference type="eggNOG" id="KOG1386">
    <property type="taxonomic scope" value="Eukaryota"/>
</dbReference>
<dbReference type="GeneTree" id="ENSGT01110000267240"/>
<dbReference type="HOGENOM" id="CLU_010246_6_0_1"/>
<dbReference type="InParanoid" id="Q3TCT4"/>
<dbReference type="OMA" id="HESIGFM"/>
<dbReference type="OrthoDB" id="6372431at2759"/>
<dbReference type="PhylomeDB" id="Q3TCT4"/>
<dbReference type="TreeFam" id="TF354343"/>
<dbReference type="BRENDA" id="3.6.1.5">
    <property type="organism ID" value="3474"/>
</dbReference>
<dbReference type="Reactome" id="R-MMU-8850843">
    <property type="pathway name" value="Phosphate bond hydrolysis by NTPDase proteins"/>
</dbReference>
<dbReference type="BioGRID-ORCS" id="93685">
    <property type="hits" value="5 hits in 79 CRISPR screens"/>
</dbReference>
<dbReference type="ChiTaRS" id="Entpd7">
    <property type="organism name" value="mouse"/>
</dbReference>
<dbReference type="PRO" id="PR:Q3TCT4"/>
<dbReference type="Proteomes" id="UP000000589">
    <property type="component" value="Chromosome 19"/>
</dbReference>
<dbReference type="RNAct" id="Q3TCT4">
    <property type="molecule type" value="protein"/>
</dbReference>
<dbReference type="Bgee" id="ENSMUSG00000025192">
    <property type="expression patterns" value="Expressed in small intestine Peyer's patch and 192 other cell types or tissues"/>
</dbReference>
<dbReference type="GO" id="GO:0030659">
    <property type="term" value="C:cytoplasmic vesicle membrane"/>
    <property type="evidence" value="ECO:0000250"/>
    <property type="project" value="UniProtKB"/>
</dbReference>
<dbReference type="GO" id="GO:0005634">
    <property type="term" value="C:nucleus"/>
    <property type="evidence" value="ECO:0000266"/>
    <property type="project" value="MGI"/>
</dbReference>
<dbReference type="GO" id="GO:0016887">
    <property type="term" value="F:ATP hydrolysis activity"/>
    <property type="evidence" value="ECO:0007669"/>
    <property type="project" value="RHEA"/>
</dbReference>
<dbReference type="GO" id="GO:0043273">
    <property type="term" value="F:CTPase activity"/>
    <property type="evidence" value="ECO:0000250"/>
    <property type="project" value="UniProtKB"/>
</dbReference>
<dbReference type="GO" id="GO:0003924">
    <property type="term" value="F:GTPase activity"/>
    <property type="evidence" value="ECO:0000250"/>
    <property type="project" value="UniProtKB"/>
</dbReference>
<dbReference type="GO" id="GO:0046872">
    <property type="term" value="F:metal ion binding"/>
    <property type="evidence" value="ECO:0007669"/>
    <property type="project" value="UniProtKB-KW"/>
</dbReference>
<dbReference type="GO" id="GO:0017110">
    <property type="term" value="F:nucleoside diphosphate phosphatase activity"/>
    <property type="evidence" value="ECO:0000266"/>
    <property type="project" value="MGI"/>
</dbReference>
<dbReference type="GO" id="GO:0017111">
    <property type="term" value="F:ribonucleoside triphosphate phosphatase activity"/>
    <property type="evidence" value="ECO:0000314"/>
    <property type="project" value="UniProtKB"/>
</dbReference>
<dbReference type="GO" id="GO:0006254">
    <property type="term" value="P:CTP catabolic process"/>
    <property type="evidence" value="ECO:0000250"/>
    <property type="project" value="UniProtKB"/>
</dbReference>
<dbReference type="GO" id="GO:0046039">
    <property type="term" value="P:GTP metabolic process"/>
    <property type="evidence" value="ECO:0000250"/>
    <property type="project" value="UniProtKB"/>
</dbReference>
<dbReference type="GO" id="GO:0034656">
    <property type="term" value="P:nucleobase-containing small molecule catabolic process"/>
    <property type="evidence" value="ECO:0000250"/>
    <property type="project" value="UniProtKB"/>
</dbReference>
<dbReference type="GO" id="GO:0050776">
    <property type="term" value="P:regulation of immune response"/>
    <property type="evidence" value="ECO:0000315"/>
    <property type="project" value="UniProtKB"/>
</dbReference>
<dbReference type="GO" id="GO:0009191">
    <property type="term" value="P:ribonucleoside diphosphate catabolic process"/>
    <property type="evidence" value="ECO:0000266"/>
    <property type="project" value="MGI"/>
</dbReference>
<dbReference type="GO" id="GO:0009203">
    <property type="term" value="P:ribonucleoside triphosphate catabolic process"/>
    <property type="evidence" value="ECO:0000266"/>
    <property type="project" value="MGI"/>
</dbReference>
<dbReference type="GO" id="GO:0072539">
    <property type="term" value="P:T-helper 17 cell differentiation"/>
    <property type="evidence" value="ECO:0000315"/>
    <property type="project" value="UniProtKB"/>
</dbReference>
<dbReference type="GO" id="GO:0046052">
    <property type="term" value="P:UTP catabolic process"/>
    <property type="evidence" value="ECO:0000250"/>
    <property type="project" value="UniProtKB"/>
</dbReference>
<dbReference type="CDD" id="cd24045">
    <property type="entry name" value="ASKHA_NBD_NTPDase4-like"/>
    <property type="match status" value="1"/>
</dbReference>
<dbReference type="FunFam" id="3.30.420.40:FF:000057">
    <property type="entry name" value="Ectonucleoside triphosphate diphosphohydrolase 4"/>
    <property type="match status" value="1"/>
</dbReference>
<dbReference type="FunFam" id="3.30.420.150:FF:000003">
    <property type="entry name" value="ectonucleoside triphosphate diphosphohydrolase 7"/>
    <property type="match status" value="1"/>
</dbReference>
<dbReference type="Gene3D" id="3.30.420.40">
    <property type="match status" value="1"/>
</dbReference>
<dbReference type="Gene3D" id="3.30.420.150">
    <property type="entry name" value="Exopolyphosphatase. Domain 2"/>
    <property type="match status" value="1"/>
</dbReference>
<dbReference type="InterPro" id="IPR000407">
    <property type="entry name" value="GDA1_CD39_NTPase"/>
</dbReference>
<dbReference type="PANTHER" id="PTHR11782">
    <property type="entry name" value="ADENOSINE/GUANOSINE DIPHOSPHATASE"/>
    <property type="match status" value="1"/>
</dbReference>
<dbReference type="PANTHER" id="PTHR11782:SF37">
    <property type="entry name" value="ECTONUCLEOSIDE TRIPHOSPHATE DIPHOSPHOHYDROLASE 7"/>
    <property type="match status" value="1"/>
</dbReference>
<dbReference type="Pfam" id="PF01150">
    <property type="entry name" value="GDA1_CD39"/>
    <property type="match status" value="1"/>
</dbReference>
<dbReference type="PROSITE" id="PS01238">
    <property type="entry name" value="GDA1_CD39_NTPASE"/>
    <property type="match status" value="1"/>
</dbReference>
<feature type="chain" id="PRO_0000274420" description="Ectonucleoside triphosphate diphosphohydrolase 7">
    <location>
        <begin position="1"/>
        <end position="606"/>
    </location>
</feature>
<feature type="topological domain" description="Cytoplasmic" evidence="4">
    <location>
        <begin position="1"/>
        <end position="28"/>
    </location>
</feature>
<feature type="transmembrane region" description="Helical" evidence="4">
    <location>
        <begin position="29"/>
        <end position="49"/>
    </location>
</feature>
<feature type="topological domain" description="Vesicular" evidence="4">
    <location>
        <begin position="50"/>
        <end position="548"/>
    </location>
</feature>
<feature type="transmembrane region" description="Helical" evidence="4">
    <location>
        <begin position="549"/>
        <end position="569"/>
    </location>
</feature>
<feature type="topological domain" description="Cytoplasmic" evidence="4">
    <location>
        <begin position="570"/>
        <end position="606"/>
    </location>
</feature>
<feature type="active site" description="Proton acceptor" evidence="2">
    <location>
        <position position="217"/>
    </location>
</feature>
<feature type="glycosylation site" description="N-linked (GlcNAc...) asparagine" evidence="4">
    <location>
        <position position="330"/>
    </location>
</feature>
<feature type="disulfide bond" evidence="1">
    <location>
        <begin position="448"/>
        <end position="477"/>
    </location>
</feature>
<feature type="splice variant" id="VSP_022743" description="In isoform 2." evidence="8">
    <original>LLGQKTGLSPDNPFLDP</original>
    <variation>YNVARLQPLGRNSSTQL</variation>
    <location>
        <begin position="338"/>
        <end position="354"/>
    </location>
</feature>
<feature type="splice variant" id="VSP_022744" description="In isoform 2." evidence="8">
    <location>
        <begin position="355"/>
        <end position="606"/>
    </location>
</feature>
<feature type="sequence conflict" description="In Ref. 1; AAG01009." evidence="9" ref="1">
    <original>S</original>
    <variation>R</variation>
    <location>
        <position position="22"/>
    </location>
</feature>
<feature type="sequence conflict" description="In Ref. 2; BAE38638." evidence="9" ref="2">
    <original>K</original>
    <variation>R</variation>
    <location>
        <position position="116"/>
    </location>
</feature>
<organism>
    <name type="scientific">Mus musculus</name>
    <name type="common">Mouse</name>
    <dbReference type="NCBI Taxonomy" id="10090"/>
    <lineage>
        <taxon>Eukaryota</taxon>
        <taxon>Metazoa</taxon>
        <taxon>Chordata</taxon>
        <taxon>Craniata</taxon>
        <taxon>Vertebrata</taxon>
        <taxon>Euteleostomi</taxon>
        <taxon>Mammalia</taxon>
        <taxon>Eutheria</taxon>
        <taxon>Euarchontoglires</taxon>
        <taxon>Glires</taxon>
        <taxon>Rodentia</taxon>
        <taxon>Myomorpha</taxon>
        <taxon>Muroidea</taxon>
        <taxon>Muridae</taxon>
        <taxon>Murinae</taxon>
        <taxon>Mus</taxon>
        <taxon>Mus</taxon>
    </lineage>
</organism>
<sequence>MARISFSYLCPASWYFTVPTVSPFLRQRVAFLGLFFIPCVLLLLLIMDLRHWATSLPRDRQYERYLARVGDLEATNTEDPNLNYGLVVDCGSSGSRIFVYFWPRHNGNPHDLLDIKQMRDRNSQPVVKKIKPGISAMADTPEHASDYLRPLLSFAAAHVPVKKHRETPLYILCTAGMRLLPERQQLAILADLVKDLPLEFDFLFSQSQAEVISGKQEGVYAWIGINFVLGRFDHEDESDSDTSVDSAAGRRRTVGILDMGGASLQIAYEVPTSASDLPPKQEEAAKILLAEFNLGCDVQHTEHVYRVYVTTFLGFGGNFARQRYEDLVLNETLNKNRLLGQKTGLSPDNPFLDPCLPVGLTDMVKRNNQVLHFRGKGDWASCRTLLSPLLARSNTSQASLNGIYQSPIDFNNSEFYGFSEFFYCTEDVLRIGGHYHGPTFAKAAQDYCGMAWPVLAQRFKNGLFSSHADEHRLKYQCFKSAWMYEVLHEGFHFPYDYPNLQTAQLVYDREVQWTLGAILYKTRFLPLRDLRQGQGGVRPAHGSWLRLSFVYNHYLFFACTLVVLLAIVLYLLRIHRIHRRQTRASAPLDLLWIEQVVPMIGVQVGP</sequence>
<comment type="function">
    <text evidence="3 6">Catalyzes the hydrolysis of nucleoside triphosphates and diphosphates in a calcium- or magnesium-dependent manner. Preferentially hydrolyzes nucleoside 5'-triphosphates, with substrate preference for UTP &gt; GTP &gt; CTP. Hydrolyzes nucleoside diphosphates only to a minor extent (By similarity). In contrast to its human ortholog is able to hydrolyze ATP. In the epithelial cells of small intestine controls luminal ATP levels, therefore regulating Th17-cell development (PubMed:23241884).</text>
</comment>
<comment type="catalytic activity">
    <reaction evidence="6">
        <text>a ribonucleoside 5'-triphosphate + H2O = a ribonucleoside 5'-diphosphate + phosphate + H(+)</text>
        <dbReference type="Rhea" id="RHEA:23680"/>
        <dbReference type="ChEBI" id="CHEBI:15377"/>
        <dbReference type="ChEBI" id="CHEBI:15378"/>
        <dbReference type="ChEBI" id="CHEBI:43474"/>
        <dbReference type="ChEBI" id="CHEBI:57930"/>
        <dbReference type="ChEBI" id="CHEBI:61557"/>
        <dbReference type="EC" id="3.6.1.15"/>
    </reaction>
</comment>
<comment type="catalytic activity">
    <reaction evidence="3">
        <text>UTP + H2O = UDP + phosphate + H(+)</text>
        <dbReference type="Rhea" id="RHEA:64900"/>
        <dbReference type="ChEBI" id="CHEBI:15377"/>
        <dbReference type="ChEBI" id="CHEBI:15378"/>
        <dbReference type="ChEBI" id="CHEBI:43474"/>
        <dbReference type="ChEBI" id="CHEBI:46398"/>
        <dbReference type="ChEBI" id="CHEBI:58223"/>
    </reaction>
</comment>
<comment type="catalytic activity">
    <reaction evidence="3">
        <text>GTP + H2O = GDP + phosphate + H(+)</text>
        <dbReference type="Rhea" id="RHEA:19669"/>
        <dbReference type="ChEBI" id="CHEBI:15377"/>
        <dbReference type="ChEBI" id="CHEBI:15378"/>
        <dbReference type="ChEBI" id="CHEBI:37565"/>
        <dbReference type="ChEBI" id="CHEBI:43474"/>
        <dbReference type="ChEBI" id="CHEBI:58189"/>
    </reaction>
</comment>
<comment type="catalytic activity">
    <reaction evidence="3">
        <text>CTP + H2O = CDP + phosphate + H(+)</text>
        <dbReference type="Rhea" id="RHEA:29387"/>
        <dbReference type="ChEBI" id="CHEBI:15377"/>
        <dbReference type="ChEBI" id="CHEBI:15378"/>
        <dbReference type="ChEBI" id="CHEBI:37563"/>
        <dbReference type="ChEBI" id="CHEBI:43474"/>
        <dbReference type="ChEBI" id="CHEBI:58069"/>
    </reaction>
</comment>
<comment type="catalytic activity">
    <reaction evidence="6">
        <text>ATP + H2O = ADP + phosphate + H(+)</text>
        <dbReference type="Rhea" id="RHEA:13065"/>
        <dbReference type="ChEBI" id="CHEBI:15377"/>
        <dbReference type="ChEBI" id="CHEBI:15378"/>
        <dbReference type="ChEBI" id="CHEBI:30616"/>
        <dbReference type="ChEBI" id="CHEBI:43474"/>
        <dbReference type="ChEBI" id="CHEBI:456216"/>
    </reaction>
</comment>
<comment type="cofactor">
    <cofactor evidence="3">
        <name>Ca(2+)</name>
        <dbReference type="ChEBI" id="CHEBI:29108"/>
    </cofactor>
    <cofactor evidence="3">
        <name>Mg(2+)</name>
        <dbReference type="ChEBI" id="CHEBI:18420"/>
    </cofactor>
</comment>
<comment type="subcellular location">
    <subcellularLocation>
        <location evidence="3">Cytoplasmic vesicle membrane</location>
        <topology evidence="4">Multi-pass membrane protein</topology>
    </subcellularLocation>
</comment>
<comment type="alternative products">
    <event type="alternative splicing"/>
    <isoform>
        <id>Q3TCT4-1</id>
        <name>1</name>
        <sequence type="displayed"/>
    </isoform>
    <isoform>
        <id>Q3TCT4-2</id>
        <name>2</name>
        <sequence type="described" ref="VSP_022743 VSP_022744"/>
    </isoform>
</comment>
<comment type="tissue specificity">
    <text evidence="5 6">Widely expressed. Expressed at high level in brain, kidney, liver, testis and small intestin. Weakly expressed in lung, thymus and heart.</text>
</comment>
<comment type="disruption phenotype">
    <text evidence="6">Deficient mice are born at the normal Mendelian ratios and grow healthily until 16 week of age. Normal lymphocyte development is observed. However deficient mice shown an increased in ATP concentrations in the small intestinal lumen and increased numbers of IL-17-producing Th17 cells in the small intestinal lamina propria. They show increased resistance to Citrobacter rodentium infection and increased susceptibility to experimental autoimmune encephalomyelitis.</text>
</comment>
<comment type="similarity">
    <text evidence="9">Belongs to the GDA1/CD39 NTPase family.</text>
</comment>
<name>ENTP7_MOUSE</name>
<protein>
    <recommendedName>
        <fullName>Ectonucleoside triphosphate diphosphohydrolase 7</fullName>
        <shortName>NTPDase 7</shortName>
        <ecNumber evidence="6">3.6.1.15</ecNumber>
    </recommendedName>
    <alternativeName>
        <fullName evidence="7">Lysosomal apyrase-like protein 1</fullName>
    </alternativeName>
</protein>
<keyword id="KW-0025">Alternative splicing</keyword>
<keyword id="KW-0106">Calcium</keyword>
<keyword id="KW-0968">Cytoplasmic vesicle</keyword>
<keyword id="KW-1015">Disulfide bond</keyword>
<keyword id="KW-0325">Glycoprotein</keyword>
<keyword id="KW-0378">Hydrolase</keyword>
<keyword id="KW-0460">Magnesium</keyword>
<keyword id="KW-0472">Membrane</keyword>
<keyword id="KW-0479">Metal-binding</keyword>
<keyword id="KW-1185">Reference proteome</keyword>
<keyword id="KW-0812">Transmembrane</keyword>
<keyword id="KW-1133">Transmembrane helix</keyword>
<evidence type="ECO:0000250" key="1"/>
<evidence type="ECO:0000250" key="2">
    <source>
        <dbReference type="UniProtKB" id="O35795"/>
    </source>
</evidence>
<evidence type="ECO:0000250" key="3">
    <source>
        <dbReference type="UniProtKB" id="Q9NQZ7"/>
    </source>
</evidence>
<evidence type="ECO:0000255" key="4"/>
<evidence type="ECO:0000269" key="5">
    <source>
    </source>
</evidence>
<evidence type="ECO:0000269" key="6">
    <source>
    </source>
</evidence>
<evidence type="ECO:0000303" key="7">
    <source>
    </source>
</evidence>
<evidence type="ECO:0000303" key="8">
    <source>
    </source>
</evidence>
<evidence type="ECO:0000305" key="9"/>